<gene>
    <name type="primary">Epm2a</name>
</gene>
<keyword id="KW-0072">Autophagy</keyword>
<keyword id="KW-0119">Carbohydrate metabolism</keyword>
<keyword id="KW-1003">Cell membrane</keyword>
<keyword id="KW-0963">Cytoplasm</keyword>
<keyword id="KW-0256">Endoplasmic reticulum</keyword>
<keyword id="KW-0321">Glycogen metabolism</keyword>
<keyword id="KW-0378">Hydrolase</keyword>
<keyword id="KW-0472">Membrane</keyword>
<keyword id="KW-0597">Phosphoprotein</keyword>
<keyword id="KW-0904">Protein phosphatase</keyword>
<keyword id="KW-1185">Reference proteome</keyword>
<keyword id="KW-0832">Ubl conjugation</keyword>
<feature type="chain" id="PRO_0000094840" description="Laforin">
    <location>
        <begin position="1"/>
        <end position="331"/>
    </location>
</feature>
<feature type="domain" description="CBM20" evidence="4">
    <location>
        <begin position="1"/>
        <end position="124"/>
    </location>
</feature>
<feature type="domain" description="Tyrosine-protein phosphatase" evidence="3">
    <location>
        <begin position="156"/>
        <end position="323"/>
    </location>
</feature>
<feature type="short sequence motif" description="Glucan phosphatase signature motif CXAGXGR" evidence="1">
    <location>
        <begin position="266"/>
        <end position="272"/>
    </location>
</feature>
<feature type="active site" description="Phosphocysteine intermediate" evidence="3">
    <location>
        <position position="266"/>
    </location>
</feature>
<feature type="binding site" evidence="1">
    <location>
        <position position="32"/>
    </location>
    <ligand>
        <name>substrate</name>
    </ligand>
</feature>
<feature type="binding site" evidence="1">
    <location>
        <position position="87"/>
    </location>
    <ligand>
        <name>substrate</name>
    </ligand>
</feature>
<feature type="binding site" evidence="1">
    <location>
        <begin position="103"/>
        <end position="107"/>
    </location>
    <ligand>
        <name>substrate</name>
    </ligand>
</feature>
<feature type="binding site" evidence="1">
    <location>
        <position position="197"/>
    </location>
    <ligand>
        <name>substrate</name>
    </ligand>
</feature>
<feature type="binding site" evidence="1">
    <location>
        <position position="235"/>
    </location>
    <ligand>
        <name>substrate</name>
    </ligand>
</feature>
<feature type="binding site" evidence="1">
    <location>
        <position position="241"/>
    </location>
    <ligand>
        <name>substrate</name>
    </ligand>
</feature>
<feature type="binding site" evidence="1">
    <location>
        <begin position="267"/>
        <end position="272"/>
    </location>
    <ligand>
        <name>substrate</name>
    </ligand>
</feature>
<feature type="binding site" evidence="1">
    <location>
        <position position="304"/>
    </location>
    <ligand>
        <name>substrate</name>
    </ligand>
</feature>
<feature type="site" description="Required for homodimerization" evidence="1">
    <location>
        <position position="329"/>
    </location>
</feature>
<feature type="modified residue" description="Phosphoserine; by AMPK" evidence="1">
    <location>
        <position position="25"/>
    </location>
</feature>
<feature type="sequence conflict" description="In Ref. 3; AAK60619." evidence="7" ref="3">
    <original>VP</original>
    <variation>DQ</variation>
    <location>
        <begin position="9"/>
        <end position="10"/>
    </location>
</feature>
<evidence type="ECO:0000250" key="1">
    <source>
        <dbReference type="UniProtKB" id="O95278"/>
    </source>
</evidence>
<evidence type="ECO:0000250" key="2">
    <source>
        <dbReference type="UniProtKB" id="Q9WUA5"/>
    </source>
</evidence>
<evidence type="ECO:0000255" key="3">
    <source>
        <dbReference type="PROSITE-ProRule" id="PRU00160"/>
    </source>
</evidence>
<evidence type="ECO:0000255" key="4">
    <source>
        <dbReference type="PROSITE-ProRule" id="PRU00594"/>
    </source>
</evidence>
<evidence type="ECO:0000255" key="5">
    <source>
        <dbReference type="PROSITE-ProRule" id="PRU10044"/>
    </source>
</evidence>
<evidence type="ECO:0000269" key="6">
    <source>
    </source>
</evidence>
<evidence type="ECO:0000305" key="7"/>
<accession>Q91XQ2</accession>
<accession>F1LPW7</accession>
<comment type="function">
    <text evidence="1 2">Plays an important role in preventing glycogen hyperphosphorylation and the formation of insoluble aggregates, via its activity as glycogen phosphatase, and by promoting the ubiquitination of proteins involved in glycogen metabolism via its interaction with the E3 ubiquitin ligase NHLRC1/malin. Dephosphorylates phosphotyrosine and synthetic substrates, such as para-nitrophenylphosphate (pNPP), and has low activity with phosphoserine and phosphothreonine substrates (in vitro). Has also been shown to dephosphorylate MAPT. Shows strong phosphatase activity towards complex carbohydrates in vitro, avoiding glycogen hyperphosphorylation which is associated with reduced branching and formation of insoluble aggregates. Forms a complex with NHLRC1/malin and HSP70, which suppresses the cellular toxicity of misfolded proteins by promoting their degradation through the ubiquitin-proteasome system (UPS). Acts as a scaffold protein to facilitate PPP1R3C/PTG ubiquitination by NHLRC1/malin. Also promotes proteasome-independent protein degradation through the macroautophagy pathway.</text>
</comment>
<comment type="catalytic activity">
    <reaction evidence="5">
        <text>O-phospho-L-tyrosyl-[protein] + H2O = L-tyrosyl-[protein] + phosphate</text>
        <dbReference type="Rhea" id="RHEA:10684"/>
        <dbReference type="Rhea" id="RHEA-COMP:10136"/>
        <dbReference type="Rhea" id="RHEA-COMP:20101"/>
        <dbReference type="ChEBI" id="CHEBI:15377"/>
        <dbReference type="ChEBI" id="CHEBI:43474"/>
        <dbReference type="ChEBI" id="CHEBI:46858"/>
        <dbReference type="ChEBI" id="CHEBI:61978"/>
        <dbReference type="EC" id="3.1.3.48"/>
    </reaction>
</comment>
<comment type="catalytic activity">
    <reaction>
        <text>O-phospho-L-seryl-[protein] + H2O = L-seryl-[protein] + phosphate</text>
        <dbReference type="Rhea" id="RHEA:20629"/>
        <dbReference type="Rhea" id="RHEA-COMP:9863"/>
        <dbReference type="Rhea" id="RHEA-COMP:11604"/>
        <dbReference type="ChEBI" id="CHEBI:15377"/>
        <dbReference type="ChEBI" id="CHEBI:29999"/>
        <dbReference type="ChEBI" id="CHEBI:43474"/>
        <dbReference type="ChEBI" id="CHEBI:83421"/>
        <dbReference type="EC" id="3.1.3.16"/>
    </reaction>
</comment>
<comment type="catalytic activity">
    <reaction>
        <text>O-phospho-L-threonyl-[protein] + H2O = L-threonyl-[protein] + phosphate</text>
        <dbReference type="Rhea" id="RHEA:47004"/>
        <dbReference type="Rhea" id="RHEA-COMP:11060"/>
        <dbReference type="Rhea" id="RHEA-COMP:11605"/>
        <dbReference type="ChEBI" id="CHEBI:15377"/>
        <dbReference type="ChEBI" id="CHEBI:30013"/>
        <dbReference type="ChEBI" id="CHEBI:43474"/>
        <dbReference type="ChEBI" id="CHEBI:61977"/>
        <dbReference type="EC" id="3.1.3.16"/>
    </reaction>
</comment>
<comment type="subunit">
    <text evidence="1">Homodimer. Interacts with itself. Interacts with PPP1R3B, PPP1R3C, PPP1R3D, HIRIP5, and EPM2AIP1. Binds glycogen and Lafora bodies. Interacts with NHLRC1/malin (via the NHL repeats). Forms a complex with NHLRC1/malin and HSP70. Interacts with PPP1R3D; in the presence of NHLC1/malin the interaction leads to ubiquitination and autophagic degradation of PPP1R3D. Interacts (via the phosphatase domain) with MAPT/Tau; the interaction dephosphorylates MAPT. Interacts with PRDM8.</text>
</comment>
<comment type="subcellular location">
    <subcellularLocation>
        <location evidence="1">Cytoplasm</location>
    </subcellularLocation>
    <subcellularLocation>
        <location evidence="1">Endoplasmic reticulum membrane</location>
        <topology evidence="1">Peripheral membrane protein</topology>
        <orientation evidence="1">Cytoplasmic side</orientation>
    </subcellularLocation>
    <subcellularLocation>
        <location evidence="1">Cell membrane</location>
    </subcellularLocation>
    <text evidence="1">Colocalizes with glycogen synthase in punctate structures in the cytoplasm. Primarily associated with polyribosomes at the rough endoplasmic reticulum, and also detected at the plasma membrane. Under glycogenolytic conditions localizes to the nucleus.</text>
</comment>
<comment type="tissue specificity">
    <text evidence="6">Widely expressed.</text>
</comment>
<comment type="domain">
    <text evidence="1">The CBM20 domain mediates binding to cytoplasmic glycogen and to Lafora polyglucosan bodies.</text>
</comment>
<comment type="PTM">
    <text evidence="1">Polyubiquitinated by NHLRC1/malin.</text>
</comment>
<comment type="PTM">
    <text evidence="1">Phosphorylation on Ser-25 by AMPK affects the phosphatase activity of the enzyme and its ability to homodimerize and interact with NHLRC1, PPP1R3C or PRKAA2.</text>
</comment>
<comment type="similarity">
    <text evidence="7">Belongs to the protein-tyrosine phosphatase family.</text>
</comment>
<dbReference type="EC" id="3.1.3.-" evidence="2"/>
<dbReference type="EC" id="3.1.3.16"/>
<dbReference type="EC" id="3.1.3.48" evidence="1"/>
<dbReference type="EMBL" id="AABR06000316">
    <property type="status" value="NOT_ANNOTATED_CDS"/>
    <property type="molecule type" value="Genomic_DNA"/>
</dbReference>
<dbReference type="EMBL" id="AABR06000317">
    <property type="status" value="NOT_ANNOTATED_CDS"/>
    <property type="molecule type" value="Genomic_DNA"/>
</dbReference>
<dbReference type="EMBL" id="AABR06000318">
    <property type="status" value="NOT_ANNOTATED_CDS"/>
    <property type="molecule type" value="Genomic_DNA"/>
</dbReference>
<dbReference type="EMBL" id="AABR06000319">
    <property type="status" value="NOT_ANNOTATED_CDS"/>
    <property type="molecule type" value="Genomic_DNA"/>
</dbReference>
<dbReference type="EMBL" id="AABR06000320">
    <property type="status" value="NOT_ANNOTATED_CDS"/>
    <property type="molecule type" value="Genomic_DNA"/>
</dbReference>
<dbReference type="EMBL" id="AABR06000321">
    <property type="status" value="NOT_ANNOTATED_CDS"/>
    <property type="molecule type" value="Genomic_DNA"/>
</dbReference>
<dbReference type="EMBL" id="AABR06000322">
    <property type="status" value="NOT_ANNOTATED_CDS"/>
    <property type="molecule type" value="Genomic_DNA"/>
</dbReference>
<dbReference type="EMBL" id="AABR06000323">
    <property type="status" value="NOT_ANNOTATED_CDS"/>
    <property type="molecule type" value="Genomic_DNA"/>
</dbReference>
<dbReference type="EMBL" id="AABR06000324">
    <property type="status" value="NOT_ANNOTATED_CDS"/>
    <property type="molecule type" value="Genomic_DNA"/>
</dbReference>
<dbReference type="EMBL" id="AABR06000325">
    <property type="status" value="NOT_ANNOTATED_CDS"/>
    <property type="molecule type" value="Genomic_DNA"/>
</dbReference>
<dbReference type="EMBL" id="AABR06000326">
    <property type="status" value="NOT_ANNOTATED_CDS"/>
    <property type="molecule type" value="Genomic_DNA"/>
</dbReference>
<dbReference type="EMBL" id="AABR06000327">
    <property type="status" value="NOT_ANNOTATED_CDS"/>
    <property type="molecule type" value="Genomic_DNA"/>
</dbReference>
<dbReference type="EMBL" id="AABR06000328">
    <property type="status" value="NOT_ANNOTATED_CDS"/>
    <property type="molecule type" value="Genomic_DNA"/>
</dbReference>
<dbReference type="EMBL" id="CH473994">
    <property type="protein sequence ID" value="EDL93717.1"/>
    <property type="molecule type" value="Genomic_DNA"/>
</dbReference>
<dbReference type="EMBL" id="AF347030">
    <property type="protein sequence ID" value="AAK60619.1"/>
    <property type="molecule type" value="mRNA"/>
</dbReference>
<dbReference type="RefSeq" id="NP_001263691.1">
    <property type="nucleotide sequence ID" value="NM_001276762.1"/>
</dbReference>
<dbReference type="SMR" id="Q91XQ2"/>
<dbReference type="BioGRID" id="250254">
    <property type="interactions" value="1"/>
</dbReference>
<dbReference type="FunCoup" id="Q91XQ2">
    <property type="interactions" value="216"/>
</dbReference>
<dbReference type="STRING" id="10116.ENSRNOP00000058646"/>
<dbReference type="PhosphoSitePlus" id="Q91XQ2"/>
<dbReference type="PaxDb" id="10116-ENSRNOP00000058646"/>
<dbReference type="PeptideAtlas" id="Q91XQ2"/>
<dbReference type="Ensembl" id="ENSRNOT00000099572.1">
    <property type="protein sequence ID" value="ENSRNOP00000076978.1"/>
    <property type="gene ID" value="ENSRNOG00000040242.5"/>
</dbReference>
<dbReference type="GeneID" id="114005"/>
<dbReference type="KEGG" id="rno:114005"/>
<dbReference type="AGR" id="RGD:71047"/>
<dbReference type="CTD" id="7957"/>
<dbReference type="RGD" id="71047">
    <property type="gene designation" value="Epm2a"/>
</dbReference>
<dbReference type="eggNOG" id="KOG1716">
    <property type="taxonomic scope" value="Eukaryota"/>
</dbReference>
<dbReference type="GeneTree" id="ENSGT00390000010101"/>
<dbReference type="HOGENOM" id="CLU_076792_0_0_1"/>
<dbReference type="InParanoid" id="Q91XQ2"/>
<dbReference type="OrthoDB" id="16262at9989"/>
<dbReference type="TreeFam" id="TF332841"/>
<dbReference type="PRO" id="PR:Q91XQ2"/>
<dbReference type="Proteomes" id="UP000002494">
    <property type="component" value="Chromosome 1"/>
</dbReference>
<dbReference type="Proteomes" id="UP000234681">
    <property type="component" value="Chromosome 1"/>
</dbReference>
<dbReference type="Bgee" id="ENSRNOG00000040242">
    <property type="expression patterns" value="Expressed in quadriceps femoris and 17 other cell types or tissues"/>
</dbReference>
<dbReference type="GO" id="GO:0005737">
    <property type="term" value="C:cytoplasm"/>
    <property type="evidence" value="ECO:0000250"/>
    <property type="project" value="UniProtKB"/>
</dbReference>
<dbReference type="GO" id="GO:0098554">
    <property type="term" value="C:cytoplasmic side of endoplasmic reticulum membrane"/>
    <property type="evidence" value="ECO:0000266"/>
    <property type="project" value="RGD"/>
</dbReference>
<dbReference type="GO" id="GO:0098556">
    <property type="term" value="C:cytoplasmic side of rough endoplasmic reticulum membrane"/>
    <property type="evidence" value="ECO:0000250"/>
    <property type="project" value="UniProtKB"/>
</dbReference>
<dbReference type="GO" id="GO:0005829">
    <property type="term" value="C:cytosol"/>
    <property type="evidence" value="ECO:0000266"/>
    <property type="project" value="RGD"/>
</dbReference>
<dbReference type="GO" id="GO:0030425">
    <property type="term" value="C:dendrite"/>
    <property type="evidence" value="ECO:0000266"/>
    <property type="project" value="RGD"/>
</dbReference>
<dbReference type="GO" id="GO:0005654">
    <property type="term" value="C:nucleoplasm"/>
    <property type="evidence" value="ECO:0007669"/>
    <property type="project" value="Ensembl"/>
</dbReference>
<dbReference type="GO" id="GO:0005634">
    <property type="term" value="C:nucleus"/>
    <property type="evidence" value="ECO:0000266"/>
    <property type="project" value="RGD"/>
</dbReference>
<dbReference type="GO" id="GO:0043204">
    <property type="term" value="C:perikaryon"/>
    <property type="evidence" value="ECO:0000266"/>
    <property type="project" value="RGD"/>
</dbReference>
<dbReference type="GO" id="GO:0005886">
    <property type="term" value="C:plasma membrane"/>
    <property type="evidence" value="ECO:0007669"/>
    <property type="project" value="UniProtKB-SubCell"/>
</dbReference>
<dbReference type="GO" id="GO:0004373">
    <property type="term" value="F:alpha-1,4-glucan glucosyltransferase (UDP-glucose donor) activity"/>
    <property type="evidence" value="ECO:0000266"/>
    <property type="project" value="RGD"/>
</dbReference>
<dbReference type="GO" id="GO:0030246">
    <property type="term" value="F:carbohydrate binding"/>
    <property type="evidence" value="ECO:0000250"/>
    <property type="project" value="UniProtKB"/>
</dbReference>
<dbReference type="GO" id="GO:0019203">
    <property type="term" value="F:carbohydrate phosphatase activity"/>
    <property type="evidence" value="ECO:0000250"/>
    <property type="project" value="UniProtKB"/>
</dbReference>
<dbReference type="GO" id="GO:2001069">
    <property type="term" value="F:glycogen binding"/>
    <property type="evidence" value="ECO:0000250"/>
    <property type="project" value="UniProtKB"/>
</dbReference>
<dbReference type="GO" id="GO:0042802">
    <property type="term" value="F:identical protein binding"/>
    <property type="evidence" value="ECO:0000266"/>
    <property type="project" value="RGD"/>
</dbReference>
<dbReference type="GO" id="GO:0016791">
    <property type="term" value="F:phosphatase activity"/>
    <property type="evidence" value="ECO:0000266"/>
    <property type="project" value="RGD"/>
</dbReference>
<dbReference type="GO" id="GO:0004721">
    <property type="term" value="F:phosphoprotein phosphatase activity"/>
    <property type="evidence" value="ECO:0000266"/>
    <property type="project" value="RGD"/>
</dbReference>
<dbReference type="GO" id="GO:0030247">
    <property type="term" value="F:polysaccharide binding"/>
    <property type="evidence" value="ECO:0000266"/>
    <property type="project" value="RGD"/>
</dbReference>
<dbReference type="GO" id="GO:0042803">
    <property type="term" value="F:protein homodimerization activity"/>
    <property type="evidence" value="ECO:0000266"/>
    <property type="project" value="RGD"/>
</dbReference>
<dbReference type="GO" id="GO:0004722">
    <property type="term" value="F:protein serine/threonine phosphatase activity"/>
    <property type="evidence" value="ECO:0000266"/>
    <property type="project" value="RGD"/>
</dbReference>
<dbReference type="GO" id="GO:0004725">
    <property type="term" value="F:protein tyrosine phosphatase activity"/>
    <property type="evidence" value="ECO:0000266"/>
    <property type="project" value="RGD"/>
</dbReference>
<dbReference type="GO" id="GO:2001070">
    <property type="term" value="F:starch binding"/>
    <property type="evidence" value="ECO:0000266"/>
    <property type="project" value="RGD"/>
</dbReference>
<dbReference type="GO" id="GO:0000045">
    <property type="term" value="P:autophagosome assembly"/>
    <property type="evidence" value="ECO:0000266"/>
    <property type="project" value="RGD"/>
</dbReference>
<dbReference type="GO" id="GO:0006914">
    <property type="term" value="P:autophagy"/>
    <property type="evidence" value="ECO:0000266"/>
    <property type="project" value="RGD"/>
</dbReference>
<dbReference type="GO" id="GO:0006816">
    <property type="term" value="P:calcium ion transport"/>
    <property type="evidence" value="ECO:0000266"/>
    <property type="project" value="RGD"/>
</dbReference>
<dbReference type="GO" id="GO:0046835">
    <property type="term" value="P:carbohydrate phosphorylation"/>
    <property type="evidence" value="ECO:0000266"/>
    <property type="project" value="RGD"/>
</dbReference>
<dbReference type="GO" id="GO:0016311">
    <property type="term" value="P:dephosphorylation"/>
    <property type="evidence" value="ECO:0000250"/>
    <property type="project" value="UniProtKB"/>
</dbReference>
<dbReference type="GO" id="GO:0014009">
    <property type="term" value="P:glial cell proliferation"/>
    <property type="evidence" value="ECO:0000266"/>
    <property type="project" value="RGD"/>
</dbReference>
<dbReference type="GO" id="GO:0005978">
    <property type="term" value="P:glycogen biosynthetic process"/>
    <property type="evidence" value="ECO:0000266"/>
    <property type="project" value="RGD"/>
</dbReference>
<dbReference type="GO" id="GO:0005977">
    <property type="term" value="P:glycogen metabolic process"/>
    <property type="evidence" value="ECO:0000250"/>
    <property type="project" value="UniProtKB"/>
</dbReference>
<dbReference type="GO" id="GO:0046959">
    <property type="term" value="P:habituation"/>
    <property type="evidence" value="ECO:0000266"/>
    <property type="project" value="RGD"/>
</dbReference>
<dbReference type="GO" id="GO:0015813">
    <property type="term" value="P:L-glutamate transmembrane transport"/>
    <property type="evidence" value="ECO:0000266"/>
    <property type="project" value="RGD"/>
</dbReference>
<dbReference type="GO" id="GO:0007005">
    <property type="term" value="P:mitochondrion organization"/>
    <property type="evidence" value="ECO:0000266"/>
    <property type="project" value="RGD"/>
</dbReference>
<dbReference type="GO" id="GO:0045786">
    <property type="term" value="P:negative regulation of cell cycle"/>
    <property type="evidence" value="ECO:0000266"/>
    <property type="project" value="RGD"/>
</dbReference>
<dbReference type="GO" id="GO:0010629">
    <property type="term" value="P:negative regulation of gene expression"/>
    <property type="evidence" value="ECO:0000266"/>
    <property type="project" value="RGD"/>
</dbReference>
<dbReference type="GO" id="GO:0032007">
    <property type="term" value="P:negative regulation of TOR signaling"/>
    <property type="evidence" value="ECO:0000266"/>
    <property type="project" value="RGD"/>
</dbReference>
<dbReference type="GO" id="GO:0007399">
    <property type="term" value="P:nervous system development"/>
    <property type="evidence" value="ECO:0000266"/>
    <property type="project" value="RGD"/>
</dbReference>
<dbReference type="GO" id="GO:0016239">
    <property type="term" value="P:positive regulation of macroautophagy"/>
    <property type="evidence" value="ECO:0000266"/>
    <property type="project" value="RGD"/>
</dbReference>
<dbReference type="GO" id="GO:0043161">
    <property type="term" value="P:proteasome-mediated ubiquitin-dependent protein catabolic process"/>
    <property type="evidence" value="ECO:0000266"/>
    <property type="project" value="RGD"/>
</dbReference>
<dbReference type="GO" id="GO:0001558">
    <property type="term" value="P:regulation of cell growth"/>
    <property type="evidence" value="ECO:0000266"/>
    <property type="project" value="RGD"/>
</dbReference>
<dbReference type="GO" id="GO:0010468">
    <property type="term" value="P:regulation of gene expression"/>
    <property type="evidence" value="ECO:0000266"/>
    <property type="project" value="RGD"/>
</dbReference>
<dbReference type="GO" id="GO:0061136">
    <property type="term" value="P:regulation of proteasomal protein catabolic process"/>
    <property type="evidence" value="ECO:0000266"/>
    <property type="project" value="RGD"/>
</dbReference>
<dbReference type="GO" id="GO:0042306">
    <property type="term" value="P:regulation of protein import into nucleus"/>
    <property type="evidence" value="ECO:0000266"/>
    <property type="project" value="RGD"/>
</dbReference>
<dbReference type="GO" id="GO:1903076">
    <property type="term" value="P:regulation of protein localization to plasma membrane"/>
    <property type="evidence" value="ECO:0000266"/>
    <property type="project" value="RGD"/>
</dbReference>
<dbReference type="GO" id="GO:0031396">
    <property type="term" value="P:regulation of protein ubiquitination"/>
    <property type="evidence" value="ECO:0000266"/>
    <property type="project" value="RGD"/>
</dbReference>
<dbReference type="GO" id="GO:0016055">
    <property type="term" value="P:Wnt signaling pathway"/>
    <property type="evidence" value="ECO:0000266"/>
    <property type="project" value="RGD"/>
</dbReference>
<dbReference type="CDD" id="cd05806">
    <property type="entry name" value="CBM20_laforin"/>
    <property type="match status" value="1"/>
</dbReference>
<dbReference type="CDD" id="cd14526">
    <property type="entry name" value="DSP_laforin-like"/>
    <property type="match status" value="1"/>
</dbReference>
<dbReference type="FunFam" id="2.60.40.10:FF:001039">
    <property type="entry name" value="laforin isoform X1"/>
    <property type="match status" value="1"/>
</dbReference>
<dbReference type="FunFam" id="3.90.190.10:FF:000054">
    <property type="entry name" value="laforin isoform X1"/>
    <property type="match status" value="1"/>
</dbReference>
<dbReference type="Gene3D" id="2.60.40.10">
    <property type="entry name" value="Immunoglobulins"/>
    <property type="match status" value="1"/>
</dbReference>
<dbReference type="Gene3D" id="3.90.190.10">
    <property type="entry name" value="Protein tyrosine phosphatase superfamily"/>
    <property type="match status" value="1"/>
</dbReference>
<dbReference type="InterPro" id="IPR013784">
    <property type="entry name" value="Carb-bd-like_fold"/>
</dbReference>
<dbReference type="InterPro" id="IPR002044">
    <property type="entry name" value="CBM20"/>
</dbReference>
<dbReference type="InterPro" id="IPR034831">
    <property type="entry name" value="CBM20_laforin"/>
</dbReference>
<dbReference type="InterPro" id="IPR045204">
    <property type="entry name" value="DSP_laforin-like"/>
</dbReference>
<dbReference type="InterPro" id="IPR000340">
    <property type="entry name" value="Dual-sp_phosphatase_cat-dom"/>
</dbReference>
<dbReference type="InterPro" id="IPR013783">
    <property type="entry name" value="Ig-like_fold"/>
</dbReference>
<dbReference type="InterPro" id="IPR042942">
    <property type="entry name" value="Laforin"/>
</dbReference>
<dbReference type="InterPro" id="IPR029021">
    <property type="entry name" value="Prot-tyrosine_phosphatase-like"/>
</dbReference>
<dbReference type="InterPro" id="IPR016130">
    <property type="entry name" value="Tyr_Pase_AS"/>
</dbReference>
<dbReference type="InterPro" id="IPR000387">
    <property type="entry name" value="Tyr_Pase_dom"/>
</dbReference>
<dbReference type="InterPro" id="IPR020422">
    <property type="entry name" value="TYR_PHOSPHATASE_DUAL_dom"/>
</dbReference>
<dbReference type="PANTHER" id="PTHR46864">
    <property type="entry name" value="LAFORIN"/>
    <property type="match status" value="1"/>
</dbReference>
<dbReference type="PANTHER" id="PTHR46864:SF1">
    <property type="entry name" value="LAFORIN"/>
    <property type="match status" value="1"/>
</dbReference>
<dbReference type="Pfam" id="PF00782">
    <property type="entry name" value="DSPc"/>
    <property type="match status" value="1"/>
</dbReference>
<dbReference type="SMART" id="SM01065">
    <property type="entry name" value="CBM_2"/>
    <property type="match status" value="1"/>
</dbReference>
<dbReference type="SMART" id="SM00195">
    <property type="entry name" value="DSPc"/>
    <property type="match status" value="1"/>
</dbReference>
<dbReference type="SUPFAM" id="SSF52799">
    <property type="entry name" value="(Phosphotyrosine protein) phosphatases II"/>
    <property type="match status" value="1"/>
</dbReference>
<dbReference type="SUPFAM" id="SSF49452">
    <property type="entry name" value="Starch-binding domain-like"/>
    <property type="match status" value="1"/>
</dbReference>
<dbReference type="PROSITE" id="PS51166">
    <property type="entry name" value="CBM20"/>
    <property type="match status" value="1"/>
</dbReference>
<dbReference type="PROSITE" id="PS00383">
    <property type="entry name" value="TYR_PHOSPHATASE_1"/>
    <property type="match status" value="1"/>
</dbReference>
<dbReference type="PROSITE" id="PS50056">
    <property type="entry name" value="TYR_PHOSPHATASE_2"/>
    <property type="match status" value="1"/>
</dbReference>
<dbReference type="PROSITE" id="PS50054">
    <property type="entry name" value="TYR_PHOSPHATASE_DUAL"/>
    <property type="match status" value="1"/>
</dbReference>
<reference key="1">
    <citation type="journal article" date="2004" name="Nature">
        <title>Genome sequence of the Brown Norway rat yields insights into mammalian evolution.</title>
        <authorList>
            <person name="Gibbs R.A."/>
            <person name="Weinstock G.M."/>
            <person name="Metzker M.L."/>
            <person name="Muzny D.M."/>
            <person name="Sodergren E.J."/>
            <person name="Scherer S."/>
            <person name="Scott G."/>
            <person name="Steffen D."/>
            <person name="Worley K.C."/>
            <person name="Burch P.E."/>
            <person name="Okwuonu G."/>
            <person name="Hines S."/>
            <person name="Lewis L."/>
            <person name="Deramo C."/>
            <person name="Delgado O."/>
            <person name="Dugan-Rocha S."/>
            <person name="Miner G."/>
            <person name="Morgan M."/>
            <person name="Hawes A."/>
            <person name="Gill R."/>
            <person name="Holt R.A."/>
            <person name="Adams M.D."/>
            <person name="Amanatides P.G."/>
            <person name="Baden-Tillson H."/>
            <person name="Barnstead M."/>
            <person name="Chin S."/>
            <person name="Evans C.A."/>
            <person name="Ferriera S."/>
            <person name="Fosler C."/>
            <person name="Glodek A."/>
            <person name="Gu Z."/>
            <person name="Jennings D."/>
            <person name="Kraft C.L."/>
            <person name="Nguyen T."/>
            <person name="Pfannkoch C.M."/>
            <person name="Sitter C."/>
            <person name="Sutton G.G."/>
            <person name="Venter J.C."/>
            <person name="Woodage T."/>
            <person name="Smith D."/>
            <person name="Lee H.-M."/>
            <person name="Gustafson E."/>
            <person name="Cahill P."/>
            <person name="Kana A."/>
            <person name="Doucette-Stamm L."/>
            <person name="Weinstock K."/>
            <person name="Fechtel K."/>
            <person name="Weiss R.B."/>
            <person name="Dunn D.M."/>
            <person name="Green E.D."/>
            <person name="Blakesley R.W."/>
            <person name="Bouffard G.G."/>
            <person name="De Jong P.J."/>
            <person name="Osoegawa K."/>
            <person name="Zhu B."/>
            <person name="Marra M."/>
            <person name="Schein J."/>
            <person name="Bosdet I."/>
            <person name="Fjell C."/>
            <person name="Jones S."/>
            <person name="Krzywinski M."/>
            <person name="Mathewson C."/>
            <person name="Siddiqui A."/>
            <person name="Wye N."/>
            <person name="McPherson J."/>
            <person name="Zhao S."/>
            <person name="Fraser C.M."/>
            <person name="Shetty J."/>
            <person name="Shatsman S."/>
            <person name="Geer K."/>
            <person name="Chen Y."/>
            <person name="Abramzon S."/>
            <person name="Nierman W.C."/>
            <person name="Havlak P.H."/>
            <person name="Chen R."/>
            <person name="Durbin K.J."/>
            <person name="Egan A."/>
            <person name="Ren Y."/>
            <person name="Song X.-Z."/>
            <person name="Li B."/>
            <person name="Liu Y."/>
            <person name="Qin X."/>
            <person name="Cawley S."/>
            <person name="Cooney A.J."/>
            <person name="D'Souza L.M."/>
            <person name="Martin K."/>
            <person name="Wu J.Q."/>
            <person name="Gonzalez-Garay M.L."/>
            <person name="Jackson A.R."/>
            <person name="Kalafus K.J."/>
            <person name="McLeod M.P."/>
            <person name="Milosavljevic A."/>
            <person name="Virk D."/>
            <person name="Volkov A."/>
            <person name="Wheeler D.A."/>
            <person name="Zhang Z."/>
            <person name="Bailey J.A."/>
            <person name="Eichler E.E."/>
            <person name="Tuzun E."/>
            <person name="Birney E."/>
            <person name="Mongin E."/>
            <person name="Ureta-Vidal A."/>
            <person name="Woodwark C."/>
            <person name="Zdobnov E."/>
            <person name="Bork P."/>
            <person name="Suyama M."/>
            <person name="Torrents D."/>
            <person name="Alexandersson M."/>
            <person name="Trask B.J."/>
            <person name="Young J.M."/>
            <person name="Huang H."/>
            <person name="Wang H."/>
            <person name="Xing H."/>
            <person name="Daniels S."/>
            <person name="Gietzen D."/>
            <person name="Schmidt J."/>
            <person name="Stevens K."/>
            <person name="Vitt U."/>
            <person name="Wingrove J."/>
            <person name="Camara F."/>
            <person name="Mar Alba M."/>
            <person name="Abril J.F."/>
            <person name="Guigo R."/>
            <person name="Smit A."/>
            <person name="Dubchak I."/>
            <person name="Rubin E.M."/>
            <person name="Couronne O."/>
            <person name="Poliakov A."/>
            <person name="Huebner N."/>
            <person name="Ganten D."/>
            <person name="Goesele C."/>
            <person name="Hummel O."/>
            <person name="Kreitler T."/>
            <person name="Lee Y.-A."/>
            <person name="Monti J."/>
            <person name="Schulz H."/>
            <person name="Zimdahl H."/>
            <person name="Himmelbauer H."/>
            <person name="Lehrach H."/>
            <person name="Jacob H.J."/>
            <person name="Bromberg S."/>
            <person name="Gullings-Handley J."/>
            <person name="Jensen-Seaman M.I."/>
            <person name="Kwitek A.E."/>
            <person name="Lazar J."/>
            <person name="Pasko D."/>
            <person name="Tonellato P.J."/>
            <person name="Twigger S."/>
            <person name="Ponting C.P."/>
            <person name="Duarte J.M."/>
            <person name="Rice S."/>
            <person name="Goodstadt L."/>
            <person name="Beatson S.A."/>
            <person name="Emes R.D."/>
            <person name="Winter E.E."/>
            <person name="Webber C."/>
            <person name="Brandt P."/>
            <person name="Nyakatura G."/>
            <person name="Adetobi M."/>
            <person name="Chiaromonte F."/>
            <person name="Elnitski L."/>
            <person name="Eswara P."/>
            <person name="Hardison R.C."/>
            <person name="Hou M."/>
            <person name="Kolbe D."/>
            <person name="Makova K."/>
            <person name="Miller W."/>
            <person name="Nekrutenko A."/>
            <person name="Riemer C."/>
            <person name="Schwartz S."/>
            <person name="Taylor J."/>
            <person name="Yang S."/>
            <person name="Zhang Y."/>
            <person name="Lindpaintner K."/>
            <person name="Andrews T.D."/>
            <person name="Caccamo M."/>
            <person name="Clamp M."/>
            <person name="Clarke L."/>
            <person name="Curwen V."/>
            <person name="Durbin R.M."/>
            <person name="Eyras E."/>
            <person name="Searle S.M."/>
            <person name="Cooper G.M."/>
            <person name="Batzoglou S."/>
            <person name="Brudno M."/>
            <person name="Sidow A."/>
            <person name="Stone E.A."/>
            <person name="Payseur B.A."/>
            <person name="Bourque G."/>
            <person name="Lopez-Otin C."/>
            <person name="Puente X.S."/>
            <person name="Chakrabarti K."/>
            <person name="Chatterji S."/>
            <person name="Dewey C."/>
            <person name="Pachter L."/>
            <person name="Bray N."/>
            <person name="Yap V.B."/>
            <person name="Caspi A."/>
            <person name="Tesler G."/>
            <person name="Pevzner P.A."/>
            <person name="Haussler D."/>
            <person name="Roskin K.M."/>
            <person name="Baertsch R."/>
            <person name="Clawson H."/>
            <person name="Furey T.S."/>
            <person name="Hinrichs A.S."/>
            <person name="Karolchik D."/>
            <person name="Kent W.J."/>
            <person name="Rosenbloom K.R."/>
            <person name="Trumbower H."/>
            <person name="Weirauch M."/>
            <person name="Cooper D.N."/>
            <person name="Stenson P.D."/>
            <person name="Ma B."/>
            <person name="Brent M."/>
            <person name="Arumugam M."/>
            <person name="Shteynberg D."/>
            <person name="Copley R.R."/>
            <person name="Taylor M.S."/>
            <person name="Riethman H."/>
            <person name="Mudunuri U."/>
            <person name="Peterson J."/>
            <person name="Guyer M."/>
            <person name="Felsenfeld A."/>
            <person name="Old S."/>
            <person name="Mockrin S."/>
            <person name="Collins F.S."/>
        </authorList>
    </citation>
    <scope>NUCLEOTIDE SEQUENCE [LARGE SCALE GENOMIC DNA]</scope>
    <source>
        <strain>Brown Norway</strain>
    </source>
</reference>
<reference key="2">
    <citation type="submission" date="2005-07" db="EMBL/GenBank/DDBJ databases">
        <authorList>
            <person name="Mural R.J."/>
            <person name="Adams M.D."/>
            <person name="Myers E.W."/>
            <person name="Smith H.O."/>
            <person name="Venter J.C."/>
        </authorList>
    </citation>
    <scope>NUCLEOTIDE SEQUENCE [LARGE SCALE GENOMIC DNA]</scope>
</reference>
<reference key="3">
    <citation type="journal article" date="2001" name="Biochem. Biophys. Res. Commun.">
        <title>Regional and developmental expression of Epm2a gene and its evolutionary conservation.</title>
        <authorList>
            <person name="Ganesh S."/>
            <person name="Agarwala K.L."/>
            <person name="Amano K."/>
            <person name="Suzuki T."/>
            <person name="Delgado-Escueta A.V."/>
            <person name="Yamakawa K."/>
        </authorList>
    </citation>
    <scope>NUCLEOTIDE SEQUENCE [MRNA] OF 5-331</scope>
    <scope>TISSUE SPECIFICITY</scope>
    <source>
        <strain>Sprague-Dawley</strain>
        <tissue>Brain cortex</tissue>
    </source>
</reference>
<proteinExistence type="evidence at transcript level"/>
<name>EPM2A_RAT</name>
<organism>
    <name type="scientific">Rattus norvegicus</name>
    <name type="common">Rat</name>
    <dbReference type="NCBI Taxonomy" id="10116"/>
    <lineage>
        <taxon>Eukaryota</taxon>
        <taxon>Metazoa</taxon>
        <taxon>Chordata</taxon>
        <taxon>Craniata</taxon>
        <taxon>Vertebrata</taxon>
        <taxon>Euteleostomi</taxon>
        <taxon>Mammalia</taxon>
        <taxon>Eutheria</taxon>
        <taxon>Euarchontoglires</taxon>
        <taxon>Glires</taxon>
        <taxon>Rodentia</taxon>
        <taxon>Myomorpha</taxon>
        <taxon>Muroidea</taxon>
        <taxon>Muridae</taxon>
        <taxon>Murinae</taxon>
        <taxon>Rattus</taxon>
    </lineage>
</organism>
<protein>
    <recommendedName>
        <fullName>Laforin</fullName>
        <ecNumber evidence="2">3.1.3.-</ecNumber>
        <ecNumber>3.1.3.16</ecNumber>
        <ecNumber evidence="1">3.1.3.48</ecNumber>
    </recommendedName>
    <alternativeName>
        <fullName>Glucan phosphatase</fullName>
    </alternativeName>
    <alternativeName>
        <fullName>Lafora PTPase</fullName>
        <shortName>LAFPTPase</shortName>
    </alternativeName>
</protein>
<sequence length="331" mass="37144">MLFRFGVVVPPAVAGTRLELLLAGSRPELGRWEPRGAVRLRPAGTAAGAAALALQEPGLWLAEVELAPEEEAADGAEPGRIDTFWYKFLQREPGGELHWEGNGPHHDRCCTYNENNLVDGVYCLPVGHWIEATGHTNEMKHTTDFYFNIAGHQAMHYSRILPNIWLGSCPRQLEHVTIKLKHELGITAVMNFQTEWDIIQNSSGCNRYPEPMTPDTMMKLYKEEGLAYIWMPTPDMSTEGRVQMLPQAVCLLHALLENGHTVYVHCNAGVGRSTAAVCGWLHYVIGWSLRKVQYFIMAKRPAVYIDEEALAQAQQDFFQKFGKVHSSICTL</sequence>